<accession>P0CR39</accession>
<accession>Q55KV2</accession>
<accession>Q5KAM7</accession>
<gene>
    <name type="primary">SEC23</name>
    <name type="ordered locus">CNBJ2310</name>
</gene>
<protein>
    <recommendedName>
        <fullName>Protein transport protein SEC23</fullName>
    </recommendedName>
</protein>
<name>SEC23_CRYNB</name>
<dbReference type="EMBL" id="AAEY01000050">
    <property type="protein sequence ID" value="EAL18308.1"/>
    <property type="molecule type" value="Genomic_DNA"/>
</dbReference>
<dbReference type="RefSeq" id="XP_772955.1">
    <property type="nucleotide sequence ID" value="XM_767862.1"/>
</dbReference>
<dbReference type="SMR" id="P0CR39"/>
<dbReference type="EnsemblFungi" id="AAW45976">
    <property type="protein sequence ID" value="AAW45976"/>
    <property type="gene ID" value="CNJ01150"/>
</dbReference>
<dbReference type="GeneID" id="4938574"/>
<dbReference type="KEGG" id="cnb:CNBJ2310"/>
<dbReference type="VEuPathDB" id="FungiDB:CNBJ2310"/>
<dbReference type="HOGENOM" id="CLU_008658_3_0_1"/>
<dbReference type="OrthoDB" id="767at5206"/>
<dbReference type="GO" id="GO:0030127">
    <property type="term" value="C:COPII vesicle coat"/>
    <property type="evidence" value="ECO:0007669"/>
    <property type="project" value="InterPro"/>
</dbReference>
<dbReference type="GO" id="GO:0070971">
    <property type="term" value="C:endoplasmic reticulum exit site"/>
    <property type="evidence" value="ECO:0007669"/>
    <property type="project" value="TreeGrafter"/>
</dbReference>
<dbReference type="GO" id="GO:0005789">
    <property type="term" value="C:endoplasmic reticulum membrane"/>
    <property type="evidence" value="ECO:0007669"/>
    <property type="project" value="UniProtKB-SubCell"/>
</dbReference>
<dbReference type="GO" id="GO:0000139">
    <property type="term" value="C:Golgi membrane"/>
    <property type="evidence" value="ECO:0007669"/>
    <property type="project" value="UniProtKB-SubCell"/>
</dbReference>
<dbReference type="GO" id="GO:0005096">
    <property type="term" value="F:GTPase activator activity"/>
    <property type="evidence" value="ECO:0007669"/>
    <property type="project" value="TreeGrafter"/>
</dbReference>
<dbReference type="GO" id="GO:0008270">
    <property type="term" value="F:zinc ion binding"/>
    <property type="evidence" value="ECO:0007669"/>
    <property type="project" value="InterPro"/>
</dbReference>
<dbReference type="GO" id="GO:0090110">
    <property type="term" value="P:COPII-coated vesicle cargo loading"/>
    <property type="evidence" value="ECO:0007669"/>
    <property type="project" value="TreeGrafter"/>
</dbReference>
<dbReference type="GO" id="GO:0006886">
    <property type="term" value="P:intracellular protein transport"/>
    <property type="evidence" value="ECO:0007669"/>
    <property type="project" value="InterPro"/>
</dbReference>
<dbReference type="CDD" id="cd01478">
    <property type="entry name" value="Sec23-like"/>
    <property type="match status" value="1"/>
</dbReference>
<dbReference type="CDD" id="cd11287">
    <property type="entry name" value="Sec23_C"/>
    <property type="match status" value="1"/>
</dbReference>
<dbReference type="FunFam" id="1.20.120.730:FF:000001">
    <property type="entry name" value="Protein transport protein SEC23"/>
    <property type="match status" value="1"/>
</dbReference>
<dbReference type="FunFam" id="2.30.30.380:FF:000001">
    <property type="entry name" value="Protein transport protein SEC23"/>
    <property type="match status" value="1"/>
</dbReference>
<dbReference type="FunFam" id="3.40.20.10:FF:000006">
    <property type="entry name" value="Protein transport protein SEC23"/>
    <property type="match status" value="1"/>
</dbReference>
<dbReference type="FunFam" id="3.40.50.410:FF:000008">
    <property type="entry name" value="Protein transport protein SEC23"/>
    <property type="match status" value="1"/>
</dbReference>
<dbReference type="Gene3D" id="2.60.40.1670">
    <property type="entry name" value="beta-sandwich domain of Sec23/24"/>
    <property type="match status" value="1"/>
</dbReference>
<dbReference type="Gene3D" id="1.20.120.730">
    <property type="entry name" value="Sec23/Sec24 helical domain"/>
    <property type="match status" value="1"/>
</dbReference>
<dbReference type="Gene3D" id="3.40.20.10">
    <property type="entry name" value="Severin"/>
    <property type="match status" value="1"/>
</dbReference>
<dbReference type="Gene3D" id="3.40.50.410">
    <property type="entry name" value="von Willebrand factor, type A domain"/>
    <property type="match status" value="1"/>
</dbReference>
<dbReference type="Gene3D" id="2.30.30.380">
    <property type="entry name" value="Zn-finger domain of Sec23/24"/>
    <property type="match status" value="1"/>
</dbReference>
<dbReference type="InterPro" id="IPR029006">
    <property type="entry name" value="ADF-H/Gelsolin-like_dom_sf"/>
</dbReference>
<dbReference type="InterPro" id="IPR007123">
    <property type="entry name" value="Gelsolin-like_dom"/>
</dbReference>
<dbReference type="InterPro" id="IPR036180">
    <property type="entry name" value="Gelsolin-like_dom_sf"/>
</dbReference>
<dbReference type="InterPro" id="IPR037364">
    <property type="entry name" value="Sec23"/>
</dbReference>
<dbReference type="InterPro" id="IPR006900">
    <property type="entry name" value="Sec23/24_helical_dom"/>
</dbReference>
<dbReference type="InterPro" id="IPR036175">
    <property type="entry name" value="Sec23/24_helical_dom_sf"/>
</dbReference>
<dbReference type="InterPro" id="IPR006896">
    <property type="entry name" value="Sec23/24_trunk_dom"/>
</dbReference>
<dbReference type="InterPro" id="IPR012990">
    <property type="entry name" value="Sec23_24_beta_S"/>
</dbReference>
<dbReference type="InterPro" id="IPR037550">
    <property type="entry name" value="Sec23_C"/>
</dbReference>
<dbReference type="InterPro" id="IPR036465">
    <property type="entry name" value="vWFA_dom_sf"/>
</dbReference>
<dbReference type="InterPro" id="IPR006895">
    <property type="entry name" value="Znf_Sec23_Sec24"/>
</dbReference>
<dbReference type="InterPro" id="IPR036174">
    <property type="entry name" value="Znf_Sec23_Sec24_sf"/>
</dbReference>
<dbReference type="PANTHER" id="PTHR11141">
    <property type="entry name" value="PROTEIN TRANSPORT PROTEIN SEC23"/>
    <property type="match status" value="1"/>
</dbReference>
<dbReference type="PANTHER" id="PTHR11141:SF0">
    <property type="entry name" value="PROTEIN TRANSPORT PROTEIN SEC23"/>
    <property type="match status" value="1"/>
</dbReference>
<dbReference type="Pfam" id="PF00626">
    <property type="entry name" value="Gelsolin"/>
    <property type="match status" value="1"/>
</dbReference>
<dbReference type="Pfam" id="PF08033">
    <property type="entry name" value="Sec23_BS"/>
    <property type="match status" value="1"/>
</dbReference>
<dbReference type="Pfam" id="PF04815">
    <property type="entry name" value="Sec23_helical"/>
    <property type="match status" value="1"/>
</dbReference>
<dbReference type="Pfam" id="PF04811">
    <property type="entry name" value="Sec23_trunk"/>
    <property type="match status" value="1"/>
</dbReference>
<dbReference type="Pfam" id="PF04810">
    <property type="entry name" value="zf-Sec23_Sec24"/>
    <property type="match status" value="1"/>
</dbReference>
<dbReference type="SUPFAM" id="SSF81995">
    <property type="entry name" value="beta-sandwich domain of Sec23/24"/>
    <property type="match status" value="1"/>
</dbReference>
<dbReference type="SUPFAM" id="SSF82754">
    <property type="entry name" value="C-terminal, gelsolin-like domain of Sec23/24"/>
    <property type="match status" value="1"/>
</dbReference>
<dbReference type="SUPFAM" id="SSF81811">
    <property type="entry name" value="Helical domain of Sec23/24"/>
    <property type="match status" value="1"/>
</dbReference>
<dbReference type="SUPFAM" id="SSF53300">
    <property type="entry name" value="vWA-like"/>
    <property type="match status" value="1"/>
</dbReference>
<dbReference type="SUPFAM" id="SSF82919">
    <property type="entry name" value="Zn-finger domain of Sec23/24"/>
    <property type="match status" value="1"/>
</dbReference>
<organism>
    <name type="scientific">Cryptococcus neoformans var. neoformans serotype D (strain B-3501A)</name>
    <name type="common">Filobasidiella neoformans</name>
    <dbReference type="NCBI Taxonomy" id="283643"/>
    <lineage>
        <taxon>Eukaryota</taxon>
        <taxon>Fungi</taxon>
        <taxon>Dikarya</taxon>
        <taxon>Basidiomycota</taxon>
        <taxon>Agaricomycotina</taxon>
        <taxon>Tremellomycetes</taxon>
        <taxon>Tremellales</taxon>
        <taxon>Cryptococcaceae</taxon>
        <taxon>Cryptococcus</taxon>
        <taxon>Cryptococcus neoformans species complex</taxon>
    </lineage>
</organism>
<comment type="function">
    <text evidence="1">Component of the coat protein complex II (COPII) which promotes the formation of transport vesicles from the endoplasmic reticulum (ER). The coat has two main functions, the physical deformation of the endoplasmic reticulum membrane into vesicles and the selection of cargo molecules (By similarity).</text>
</comment>
<comment type="subunit">
    <text evidence="1">The COPII coat is composed of at least 5 proteins: the SEC23/24 complex, the SEC13/31 complex, and the protein SAR1.</text>
</comment>
<comment type="subcellular location">
    <subcellularLocation>
        <location evidence="1">Cytoplasm</location>
    </subcellularLocation>
    <subcellularLocation>
        <location evidence="1">Cytoplasmic vesicle</location>
        <location evidence="1">COPII-coated vesicle membrane</location>
        <topology evidence="1">Peripheral membrane protein</topology>
        <orientation evidence="1">Cytoplasmic side</orientation>
    </subcellularLocation>
    <subcellularLocation>
        <location evidence="1">Endoplasmic reticulum membrane</location>
        <topology evidence="1">Peripheral membrane protein</topology>
        <orientation evidence="1">Cytoplasmic side</orientation>
    </subcellularLocation>
    <subcellularLocation>
        <location evidence="1">Golgi apparatus membrane</location>
        <topology evidence="1">Peripheral membrane protein</topology>
        <orientation evidence="1">Cytoplasmic side</orientation>
    </subcellularLocation>
</comment>
<comment type="similarity">
    <text evidence="2">Belongs to the SEC23/SEC24 family. SEC23 subfamily.</text>
</comment>
<sequence length="763" mass="85146">MNFEDIEDKDGVRFSWNVWPSSRLEATRTVVPISALYTPLKEREDLPPVMYEPVTCKGSSCKAILNPYCQVDVRGKMWICPFCLQRNPFPPHYHQDLSPNNLPPELLPKFTTIEYTLSRPAQIPPIFLYVVDTCVDEDELKALKETLVVSLSLLPPNALVGLITYGTMAMVHELAYADCPKAYVFRGSKDYQPKQIADMLGLNPSNRPIQPVRPGQPMPAPAASKFLMPVQACEFQLTNILEQLQRDPWPVEQDKRPLRCTGVALSVAVSLLETAFPNTGARIMLFSGGPATDGPGMVVGPELREPIRSHHDIDRDSVKHFKRASKFYEALSKRASVNGHAIDIYAGCLDQVGLLEMKSLTNATNGVMTISDSFMTAIFKQSFLRTLGKDEQGYLKMGFNATYDVLTTKELKISGVIGHVISANKKSSCVGETEIGIGQTSAWKVCSLTPKSTLATYFEVVTPAGQALTPNQSGLIQFVTHYQHSSGQYRLRVTTVSRVFQEGGHPSIAASFDQEAAAVLMARIAVFKAEIDDSPDVLRWLDRMLIRLCQKFADYRKEDPTSFQLSPNFSIYPQFMFHLRRSQFLQVFNNSPDETAFYRHVLNDSDVNNSLIMIQPTLMSYGFDSEPHPVLLDSVSIRPDVILLLDTFFHILIFHGETIAQWRKANYQEQEDYANFKELLEAPIGDAQELLEDRMPIPRYVVCDQGGSQARFLLSKLNPSTTHMSGSNYGAGPAGGQAIFTDDVSLQVFMEHLKRLAVGASTS</sequence>
<evidence type="ECO:0000250" key="1"/>
<evidence type="ECO:0000305" key="2"/>
<reference key="1">
    <citation type="journal article" date="2005" name="Science">
        <title>The genome of the basidiomycetous yeast and human pathogen Cryptococcus neoformans.</title>
        <authorList>
            <person name="Loftus B.J."/>
            <person name="Fung E."/>
            <person name="Roncaglia P."/>
            <person name="Rowley D."/>
            <person name="Amedeo P."/>
            <person name="Bruno D."/>
            <person name="Vamathevan J."/>
            <person name="Miranda M."/>
            <person name="Anderson I.J."/>
            <person name="Fraser J.A."/>
            <person name="Allen J.E."/>
            <person name="Bosdet I.E."/>
            <person name="Brent M.R."/>
            <person name="Chiu R."/>
            <person name="Doering T.L."/>
            <person name="Donlin M.J."/>
            <person name="D'Souza C.A."/>
            <person name="Fox D.S."/>
            <person name="Grinberg V."/>
            <person name="Fu J."/>
            <person name="Fukushima M."/>
            <person name="Haas B.J."/>
            <person name="Huang J.C."/>
            <person name="Janbon G."/>
            <person name="Jones S.J.M."/>
            <person name="Koo H.L."/>
            <person name="Krzywinski M.I."/>
            <person name="Kwon-Chung K.J."/>
            <person name="Lengeler K.B."/>
            <person name="Maiti R."/>
            <person name="Marra M.A."/>
            <person name="Marra R.E."/>
            <person name="Mathewson C.A."/>
            <person name="Mitchell T.G."/>
            <person name="Pertea M."/>
            <person name="Riggs F.R."/>
            <person name="Salzberg S.L."/>
            <person name="Schein J.E."/>
            <person name="Shvartsbeyn A."/>
            <person name="Shin H."/>
            <person name="Shumway M."/>
            <person name="Specht C.A."/>
            <person name="Suh B.B."/>
            <person name="Tenney A."/>
            <person name="Utterback T.R."/>
            <person name="Wickes B.L."/>
            <person name="Wortman J.R."/>
            <person name="Wye N.H."/>
            <person name="Kronstad J.W."/>
            <person name="Lodge J.K."/>
            <person name="Heitman J."/>
            <person name="Davis R.W."/>
            <person name="Fraser C.M."/>
            <person name="Hyman R.W."/>
        </authorList>
    </citation>
    <scope>NUCLEOTIDE SEQUENCE [LARGE SCALE GENOMIC DNA]</scope>
    <source>
        <strain>B-3501A</strain>
    </source>
</reference>
<keyword id="KW-0963">Cytoplasm</keyword>
<keyword id="KW-0968">Cytoplasmic vesicle</keyword>
<keyword id="KW-0256">Endoplasmic reticulum</keyword>
<keyword id="KW-0931">ER-Golgi transport</keyword>
<keyword id="KW-0333">Golgi apparatus</keyword>
<keyword id="KW-0472">Membrane</keyword>
<keyword id="KW-0479">Metal-binding</keyword>
<keyword id="KW-0653">Protein transport</keyword>
<keyword id="KW-0813">Transport</keyword>
<keyword id="KW-0862">Zinc</keyword>
<proteinExistence type="inferred from homology"/>
<feature type="chain" id="PRO_0000410281" description="Protein transport protein SEC23">
    <location>
        <begin position="1"/>
        <end position="763"/>
    </location>
</feature>
<feature type="binding site" evidence="1">
    <location>
        <position position="56"/>
    </location>
    <ligand>
        <name>Zn(2+)</name>
        <dbReference type="ChEBI" id="CHEBI:29105"/>
    </ligand>
</feature>
<feature type="binding site" evidence="1">
    <location>
        <position position="61"/>
    </location>
    <ligand>
        <name>Zn(2+)</name>
        <dbReference type="ChEBI" id="CHEBI:29105"/>
    </ligand>
</feature>
<feature type="binding site" evidence="1">
    <location>
        <position position="80"/>
    </location>
    <ligand>
        <name>Zn(2+)</name>
        <dbReference type="ChEBI" id="CHEBI:29105"/>
    </ligand>
</feature>
<feature type="binding site" evidence="1">
    <location>
        <position position="83"/>
    </location>
    <ligand>
        <name>Zn(2+)</name>
        <dbReference type="ChEBI" id="CHEBI:29105"/>
    </ligand>
</feature>